<gene>
    <name type="primary">metG</name>
    <name type="ordered locus">CA_C2991</name>
</gene>
<protein>
    <recommendedName>
        <fullName>Methionine--tRNA ligase</fullName>
        <ecNumber>6.1.1.10</ecNumber>
    </recommendedName>
    <alternativeName>
        <fullName>Methionyl-tRNA synthetase</fullName>
        <shortName>MetRS</shortName>
    </alternativeName>
</protein>
<dbReference type="EC" id="6.1.1.10"/>
<dbReference type="EMBL" id="AE001437">
    <property type="protein sequence ID" value="AAK80932.1"/>
    <property type="molecule type" value="Genomic_DNA"/>
</dbReference>
<dbReference type="PIR" id="A97268">
    <property type="entry name" value="A97268"/>
</dbReference>
<dbReference type="RefSeq" id="NP_349592.1">
    <property type="nucleotide sequence ID" value="NC_003030.1"/>
</dbReference>
<dbReference type="RefSeq" id="WP_010966273.1">
    <property type="nucleotide sequence ID" value="NC_003030.1"/>
</dbReference>
<dbReference type="SMR" id="Q97EW5"/>
<dbReference type="STRING" id="272562.CA_C2991"/>
<dbReference type="GeneID" id="44999478"/>
<dbReference type="KEGG" id="cac:CA_C2991"/>
<dbReference type="PATRIC" id="fig|272562.8.peg.3175"/>
<dbReference type="eggNOG" id="COG0073">
    <property type="taxonomic scope" value="Bacteria"/>
</dbReference>
<dbReference type="eggNOG" id="COG0143">
    <property type="taxonomic scope" value="Bacteria"/>
</dbReference>
<dbReference type="HOGENOM" id="CLU_009710_9_4_9"/>
<dbReference type="OrthoDB" id="9810191at2"/>
<dbReference type="Proteomes" id="UP000000814">
    <property type="component" value="Chromosome"/>
</dbReference>
<dbReference type="GO" id="GO:0005737">
    <property type="term" value="C:cytoplasm"/>
    <property type="evidence" value="ECO:0007669"/>
    <property type="project" value="UniProtKB-SubCell"/>
</dbReference>
<dbReference type="GO" id="GO:0005524">
    <property type="term" value="F:ATP binding"/>
    <property type="evidence" value="ECO:0007669"/>
    <property type="project" value="UniProtKB-UniRule"/>
</dbReference>
<dbReference type="GO" id="GO:0046872">
    <property type="term" value="F:metal ion binding"/>
    <property type="evidence" value="ECO:0007669"/>
    <property type="project" value="UniProtKB-KW"/>
</dbReference>
<dbReference type="GO" id="GO:0004825">
    <property type="term" value="F:methionine-tRNA ligase activity"/>
    <property type="evidence" value="ECO:0007669"/>
    <property type="project" value="UniProtKB-UniRule"/>
</dbReference>
<dbReference type="GO" id="GO:0000049">
    <property type="term" value="F:tRNA binding"/>
    <property type="evidence" value="ECO:0007669"/>
    <property type="project" value="UniProtKB-KW"/>
</dbReference>
<dbReference type="GO" id="GO:0006431">
    <property type="term" value="P:methionyl-tRNA aminoacylation"/>
    <property type="evidence" value="ECO:0007669"/>
    <property type="project" value="UniProtKB-UniRule"/>
</dbReference>
<dbReference type="CDD" id="cd07957">
    <property type="entry name" value="Anticodon_Ia_Met"/>
    <property type="match status" value="1"/>
</dbReference>
<dbReference type="CDD" id="cd00814">
    <property type="entry name" value="MetRS_core"/>
    <property type="match status" value="1"/>
</dbReference>
<dbReference type="CDD" id="cd02800">
    <property type="entry name" value="tRNA_bind_EcMetRS_like"/>
    <property type="match status" value="1"/>
</dbReference>
<dbReference type="FunFam" id="1.10.730.10:FF:000026">
    <property type="entry name" value="Methionine--tRNA ligase"/>
    <property type="match status" value="1"/>
</dbReference>
<dbReference type="FunFam" id="2.170.220.10:FF:000002">
    <property type="entry name" value="Methionine--tRNA ligase"/>
    <property type="match status" value="1"/>
</dbReference>
<dbReference type="FunFam" id="2.40.50.140:FF:000042">
    <property type="entry name" value="Methionine--tRNA ligase"/>
    <property type="match status" value="1"/>
</dbReference>
<dbReference type="Gene3D" id="2.170.220.10">
    <property type="match status" value="1"/>
</dbReference>
<dbReference type="Gene3D" id="3.40.50.620">
    <property type="entry name" value="HUPs"/>
    <property type="match status" value="1"/>
</dbReference>
<dbReference type="Gene3D" id="1.10.730.10">
    <property type="entry name" value="Isoleucyl-tRNA Synthetase, Domain 1"/>
    <property type="match status" value="1"/>
</dbReference>
<dbReference type="Gene3D" id="2.40.50.140">
    <property type="entry name" value="Nucleic acid-binding proteins"/>
    <property type="match status" value="1"/>
</dbReference>
<dbReference type="HAMAP" id="MF_01228">
    <property type="entry name" value="Met_tRNA_synth_type2"/>
    <property type="match status" value="1"/>
</dbReference>
<dbReference type="InterPro" id="IPR001412">
    <property type="entry name" value="aa-tRNA-synth_I_CS"/>
</dbReference>
<dbReference type="InterPro" id="IPR041872">
    <property type="entry name" value="Anticodon_Met"/>
</dbReference>
<dbReference type="InterPro" id="IPR004495">
    <property type="entry name" value="Met-tRNA-synth_bsu_C"/>
</dbReference>
<dbReference type="InterPro" id="IPR014758">
    <property type="entry name" value="Met-tRNA_synth"/>
</dbReference>
<dbReference type="InterPro" id="IPR023457">
    <property type="entry name" value="Met-tRNA_synth_2"/>
</dbReference>
<dbReference type="InterPro" id="IPR015413">
    <property type="entry name" value="Methionyl/Leucyl_tRNA_Synth"/>
</dbReference>
<dbReference type="InterPro" id="IPR033911">
    <property type="entry name" value="MetRS_core"/>
</dbReference>
<dbReference type="InterPro" id="IPR012340">
    <property type="entry name" value="NA-bd_OB-fold"/>
</dbReference>
<dbReference type="InterPro" id="IPR014729">
    <property type="entry name" value="Rossmann-like_a/b/a_fold"/>
</dbReference>
<dbReference type="InterPro" id="IPR002547">
    <property type="entry name" value="tRNA-bd_dom"/>
</dbReference>
<dbReference type="InterPro" id="IPR009080">
    <property type="entry name" value="tRNAsynth_Ia_anticodon-bd"/>
</dbReference>
<dbReference type="NCBIfam" id="TIGR00398">
    <property type="entry name" value="metG"/>
    <property type="match status" value="1"/>
</dbReference>
<dbReference type="NCBIfam" id="TIGR00399">
    <property type="entry name" value="metG_C_term"/>
    <property type="match status" value="1"/>
</dbReference>
<dbReference type="NCBIfam" id="NF008900">
    <property type="entry name" value="PRK12267.1"/>
    <property type="match status" value="1"/>
</dbReference>
<dbReference type="PANTHER" id="PTHR43326:SF1">
    <property type="entry name" value="METHIONINE--TRNA LIGASE, MITOCHONDRIAL"/>
    <property type="match status" value="1"/>
</dbReference>
<dbReference type="PANTHER" id="PTHR43326">
    <property type="entry name" value="METHIONYL-TRNA SYNTHETASE"/>
    <property type="match status" value="1"/>
</dbReference>
<dbReference type="Pfam" id="PF19303">
    <property type="entry name" value="Anticodon_3"/>
    <property type="match status" value="1"/>
</dbReference>
<dbReference type="Pfam" id="PF09334">
    <property type="entry name" value="tRNA-synt_1g"/>
    <property type="match status" value="2"/>
</dbReference>
<dbReference type="Pfam" id="PF01588">
    <property type="entry name" value="tRNA_bind"/>
    <property type="match status" value="1"/>
</dbReference>
<dbReference type="PRINTS" id="PR01041">
    <property type="entry name" value="TRNASYNTHMET"/>
</dbReference>
<dbReference type="SUPFAM" id="SSF47323">
    <property type="entry name" value="Anticodon-binding domain of a subclass of class I aminoacyl-tRNA synthetases"/>
    <property type="match status" value="1"/>
</dbReference>
<dbReference type="SUPFAM" id="SSF50249">
    <property type="entry name" value="Nucleic acid-binding proteins"/>
    <property type="match status" value="1"/>
</dbReference>
<dbReference type="SUPFAM" id="SSF52374">
    <property type="entry name" value="Nucleotidylyl transferase"/>
    <property type="match status" value="1"/>
</dbReference>
<dbReference type="PROSITE" id="PS00178">
    <property type="entry name" value="AA_TRNA_LIGASE_I"/>
    <property type="match status" value="1"/>
</dbReference>
<dbReference type="PROSITE" id="PS50886">
    <property type="entry name" value="TRBD"/>
    <property type="match status" value="1"/>
</dbReference>
<feature type="chain" id="PRO_0000139215" description="Methionine--tRNA ligase">
    <location>
        <begin position="1"/>
        <end position="644"/>
    </location>
</feature>
<feature type="domain" description="tRNA-binding">
    <location>
        <begin position="542"/>
        <end position="644"/>
    </location>
</feature>
<feature type="short sequence motif" description="'HIGH' region">
    <location>
        <begin position="14"/>
        <end position="24"/>
    </location>
</feature>
<feature type="short sequence motif" description="'KMSKS' region">
    <location>
        <begin position="299"/>
        <end position="303"/>
    </location>
</feature>
<feature type="binding site" evidence="1">
    <location>
        <position position="129"/>
    </location>
    <ligand>
        <name>Zn(2+)</name>
        <dbReference type="ChEBI" id="CHEBI:29105"/>
    </ligand>
</feature>
<feature type="binding site" evidence="1">
    <location>
        <position position="132"/>
    </location>
    <ligand>
        <name>Zn(2+)</name>
        <dbReference type="ChEBI" id="CHEBI:29105"/>
    </ligand>
</feature>
<feature type="binding site" evidence="1">
    <location>
        <position position="146"/>
    </location>
    <ligand>
        <name>Zn(2+)</name>
        <dbReference type="ChEBI" id="CHEBI:29105"/>
    </ligand>
</feature>
<feature type="binding site" evidence="1">
    <location>
        <position position="149"/>
    </location>
    <ligand>
        <name>Zn(2+)</name>
        <dbReference type="ChEBI" id="CHEBI:29105"/>
    </ligand>
</feature>
<feature type="binding site" evidence="1">
    <location>
        <position position="302"/>
    </location>
    <ligand>
        <name>ATP</name>
        <dbReference type="ChEBI" id="CHEBI:30616"/>
    </ligand>
</feature>
<keyword id="KW-0030">Aminoacyl-tRNA synthetase</keyword>
<keyword id="KW-0067">ATP-binding</keyword>
<keyword id="KW-0963">Cytoplasm</keyword>
<keyword id="KW-0436">Ligase</keyword>
<keyword id="KW-0479">Metal-binding</keyword>
<keyword id="KW-0547">Nucleotide-binding</keyword>
<keyword id="KW-0648">Protein biosynthesis</keyword>
<keyword id="KW-1185">Reference proteome</keyword>
<keyword id="KW-0694">RNA-binding</keyword>
<keyword id="KW-0820">tRNA-binding</keyword>
<keyword id="KW-0862">Zinc</keyword>
<reference key="1">
    <citation type="journal article" date="2001" name="J. Bacteriol.">
        <title>Genome sequence and comparative analysis of the solvent-producing bacterium Clostridium acetobutylicum.</title>
        <authorList>
            <person name="Noelling J."/>
            <person name="Breton G."/>
            <person name="Omelchenko M.V."/>
            <person name="Makarova K.S."/>
            <person name="Zeng Q."/>
            <person name="Gibson R."/>
            <person name="Lee H.M."/>
            <person name="Dubois J."/>
            <person name="Qiu D."/>
            <person name="Hitti J."/>
            <person name="Wolf Y.I."/>
            <person name="Tatusov R.L."/>
            <person name="Sabathe F."/>
            <person name="Doucette-Stamm L.A."/>
            <person name="Soucaille P."/>
            <person name="Daly M.J."/>
            <person name="Bennett G.N."/>
            <person name="Koonin E.V."/>
            <person name="Smith D.R."/>
        </authorList>
    </citation>
    <scope>NUCLEOTIDE SEQUENCE [LARGE SCALE GENOMIC DNA]</scope>
    <source>
        <strain>ATCC 824 / DSM 792 / JCM 1419 / IAM 19013 / LMG 5710 / NBRC 13948 / NRRL B-527 / VKM B-1787 / 2291 / W</strain>
    </source>
</reference>
<sequence length="644" mass="73618">MSEKKKFYITTPIYYPSAKLHIGNTYTTVASDALVRFKRLQGYDAFMLTGTDEHGQKIQRIAEDKGITPKAYVDEIVAGIKDLWKMMNISYDKFIRTTDEEHVKAVQKIVKKFYDNGDIYKSAYEGWYCTPCESFWTETQLVDGKCPDCGRPVEKTKEEAYFFKMSKYADRLIKYIEDHPDFIQPESRKNEMLNNFLKPGLQDLCISRSSFDWGIPITFDEKHVIYVWIDALSNYITALGYGSDNDELYNKFWPADLHLVGKDIIRFHTIYWPIMLMALDLPLPKQVFGHGWLLVDGGKMSKSKGNVVDPVVLINEFGTDPVRYYLLHEIPFGSDGLFNNEIFIKKINSDLANDLGNLVSRTAAMIEKYFDGSIQPPVDKEEIDNELIDMAISLPEKLDEDIKKLKIPEALDHIWDLIKRANKYIDETTPWVLAKDENKKARLGTVLYNLVESLRFVATTLTPFLPETGEKIKTQLNIELDTWESLSAFDGTRAGTKVSKGEVIFPRIDVDKKIEELNKLKEEQLKATRKMQPLKPEISIDDVDKLDLRVVKVLECEPVKKSKKLLKLKVELGGEERQVLSGISQFYKPEDLIGKKVVLVANLKPAKLMGQLSQGMILAVATDDDSKLYTLDIPEDIPTGSIVR</sequence>
<organism>
    <name type="scientific">Clostridium acetobutylicum (strain ATCC 824 / DSM 792 / JCM 1419 / IAM 19013 / LMG 5710 / NBRC 13948 / NRRL B-527 / VKM B-1787 / 2291 / W)</name>
    <dbReference type="NCBI Taxonomy" id="272562"/>
    <lineage>
        <taxon>Bacteria</taxon>
        <taxon>Bacillati</taxon>
        <taxon>Bacillota</taxon>
        <taxon>Clostridia</taxon>
        <taxon>Eubacteriales</taxon>
        <taxon>Clostridiaceae</taxon>
        <taxon>Clostridium</taxon>
    </lineage>
</organism>
<evidence type="ECO:0000250" key="1"/>
<evidence type="ECO:0000305" key="2"/>
<accession>Q97EW5</accession>
<proteinExistence type="inferred from homology"/>
<name>SYM_CLOAB</name>
<comment type="function">
    <text evidence="1">Is required not only for elongation of protein synthesis but also for the initiation of all mRNA translation through initiator tRNA(fMet) aminoacylation.</text>
</comment>
<comment type="catalytic activity">
    <reaction>
        <text>tRNA(Met) + L-methionine + ATP = L-methionyl-tRNA(Met) + AMP + diphosphate</text>
        <dbReference type="Rhea" id="RHEA:13481"/>
        <dbReference type="Rhea" id="RHEA-COMP:9667"/>
        <dbReference type="Rhea" id="RHEA-COMP:9698"/>
        <dbReference type="ChEBI" id="CHEBI:30616"/>
        <dbReference type="ChEBI" id="CHEBI:33019"/>
        <dbReference type="ChEBI" id="CHEBI:57844"/>
        <dbReference type="ChEBI" id="CHEBI:78442"/>
        <dbReference type="ChEBI" id="CHEBI:78530"/>
        <dbReference type="ChEBI" id="CHEBI:456215"/>
        <dbReference type="EC" id="6.1.1.10"/>
    </reaction>
</comment>
<comment type="cofactor">
    <cofactor evidence="1">
        <name>Zn(2+)</name>
        <dbReference type="ChEBI" id="CHEBI:29105"/>
    </cofactor>
    <text evidence="1">Binds 1 zinc ion per subunit.</text>
</comment>
<comment type="subunit">
    <text evidence="1">Homodimer.</text>
</comment>
<comment type="subcellular location">
    <subcellularLocation>
        <location evidence="1">Cytoplasm</location>
    </subcellularLocation>
</comment>
<comment type="similarity">
    <text evidence="2">Belongs to the class-I aminoacyl-tRNA synthetase family. MetG type 2A subfamily.</text>
</comment>